<dbReference type="EMBL" id="CP000611">
    <property type="protein sequence ID" value="ABQ73173.1"/>
    <property type="molecule type" value="Genomic_DNA"/>
</dbReference>
<dbReference type="SMR" id="A5U2C3"/>
<dbReference type="KEGG" id="mra:MRA_1430"/>
<dbReference type="eggNOG" id="COG1660">
    <property type="taxonomic scope" value="Bacteria"/>
</dbReference>
<dbReference type="HOGENOM" id="CLU_059558_0_0_11"/>
<dbReference type="Proteomes" id="UP000001988">
    <property type="component" value="Chromosome"/>
</dbReference>
<dbReference type="GO" id="GO:0005524">
    <property type="term" value="F:ATP binding"/>
    <property type="evidence" value="ECO:0007669"/>
    <property type="project" value="UniProtKB-UniRule"/>
</dbReference>
<dbReference type="GO" id="GO:0005525">
    <property type="term" value="F:GTP binding"/>
    <property type="evidence" value="ECO:0007669"/>
    <property type="project" value="UniProtKB-UniRule"/>
</dbReference>
<dbReference type="HAMAP" id="MF_00636">
    <property type="entry name" value="RapZ_like"/>
    <property type="match status" value="1"/>
</dbReference>
<dbReference type="InterPro" id="IPR027417">
    <property type="entry name" value="P-loop_NTPase"/>
</dbReference>
<dbReference type="InterPro" id="IPR005337">
    <property type="entry name" value="RapZ-like"/>
</dbReference>
<dbReference type="InterPro" id="IPR053930">
    <property type="entry name" value="RapZ-like_N"/>
</dbReference>
<dbReference type="InterPro" id="IPR053931">
    <property type="entry name" value="RapZ_C"/>
</dbReference>
<dbReference type="NCBIfam" id="NF003828">
    <property type="entry name" value="PRK05416.1"/>
    <property type="match status" value="1"/>
</dbReference>
<dbReference type="PANTHER" id="PTHR30448">
    <property type="entry name" value="RNASE ADAPTER PROTEIN RAPZ"/>
    <property type="match status" value="1"/>
</dbReference>
<dbReference type="PANTHER" id="PTHR30448:SF0">
    <property type="entry name" value="RNASE ADAPTER PROTEIN RAPZ"/>
    <property type="match status" value="1"/>
</dbReference>
<dbReference type="Pfam" id="PF22740">
    <property type="entry name" value="PapZ_C"/>
    <property type="match status" value="1"/>
</dbReference>
<dbReference type="Pfam" id="PF03668">
    <property type="entry name" value="RapZ-like_N"/>
    <property type="match status" value="1"/>
</dbReference>
<dbReference type="PIRSF" id="PIRSF005052">
    <property type="entry name" value="P-loopkin"/>
    <property type="match status" value="1"/>
</dbReference>
<dbReference type="SUPFAM" id="SSF52540">
    <property type="entry name" value="P-loop containing nucleoside triphosphate hydrolases"/>
    <property type="match status" value="1"/>
</dbReference>
<evidence type="ECO:0000255" key="1">
    <source>
        <dbReference type="HAMAP-Rule" id="MF_00636"/>
    </source>
</evidence>
<reference key="1">
    <citation type="journal article" date="2008" name="PLoS ONE">
        <title>Genetic basis of virulence attenuation revealed by comparative genomic analysis of Mycobacterium tuberculosis strain H37Ra versus H37Rv.</title>
        <authorList>
            <person name="Zheng H."/>
            <person name="Lu L."/>
            <person name="Wang B."/>
            <person name="Pu S."/>
            <person name="Zhang X."/>
            <person name="Zhu G."/>
            <person name="Shi W."/>
            <person name="Zhang L."/>
            <person name="Wang H."/>
            <person name="Wang S."/>
            <person name="Zhao G."/>
            <person name="Zhang Y."/>
        </authorList>
    </citation>
    <scope>NUCLEOTIDE SEQUENCE [LARGE SCALE GENOMIC DNA]</scope>
    <source>
        <strain>ATCC 25177 / H37Ra</strain>
    </source>
</reference>
<name>Y1430_MYCTA</name>
<keyword id="KW-0067">ATP-binding</keyword>
<keyword id="KW-0342">GTP-binding</keyword>
<keyword id="KW-0547">Nucleotide-binding</keyword>
<keyword id="KW-1185">Reference proteome</keyword>
<organism>
    <name type="scientific">Mycobacterium tuberculosis (strain ATCC 25177 / H37Ra)</name>
    <dbReference type="NCBI Taxonomy" id="419947"/>
    <lineage>
        <taxon>Bacteria</taxon>
        <taxon>Bacillati</taxon>
        <taxon>Actinomycetota</taxon>
        <taxon>Actinomycetes</taxon>
        <taxon>Mycobacteriales</taxon>
        <taxon>Mycobacteriaceae</taxon>
        <taxon>Mycobacterium</taxon>
        <taxon>Mycobacterium tuberculosis complex</taxon>
    </lineage>
</organism>
<gene>
    <name type="ordered locus">MRA_1430</name>
</gene>
<accession>A5U2C3</accession>
<feature type="chain" id="PRO_1000056837" description="Nucleotide-binding protein MRA_1430">
    <location>
        <begin position="1"/>
        <end position="301"/>
    </location>
</feature>
<feature type="binding site" evidence="1">
    <location>
        <begin position="24"/>
        <end position="31"/>
    </location>
    <ligand>
        <name>ATP</name>
        <dbReference type="ChEBI" id="CHEBI:30616"/>
    </ligand>
</feature>
<feature type="binding site" evidence="1">
    <location>
        <begin position="75"/>
        <end position="78"/>
    </location>
    <ligand>
        <name>GTP</name>
        <dbReference type="ChEBI" id="CHEBI:37565"/>
    </ligand>
</feature>
<comment type="function">
    <text evidence="1">Displays ATPase and GTPase activities.</text>
</comment>
<comment type="similarity">
    <text evidence="1">Belongs to the RapZ-like family.</text>
</comment>
<sequence length="301" mass="32912">MMNHARGVENRSEGGGIDVVLVTGLSGAGRGTAAKVLEDLGWYVADNLPPQLITRMVDFGLAAGSRITQLAVVMDVRSRGFTGDLDSVRNELATRAITPRVVFMEASDDTLVRRYEQNRRSHPLQGEQTLAEGIAAERRMLAPVRATADLIIDTSTLSVGGLRDSIERAFGGDGGATTSVTVESFGFKYGLPMDADMVMDVRFLPNPHWVDELRPLTGQHPAVRDYVLHRPGAAEFLESYHRLLSLVVDGYRREGKRYMTIAIGCTGGKHRSVAIAEALMGLLRSDQQLSVRALHRDLGRE</sequence>
<proteinExistence type="inferred from homology"/>
<protein>
    <recommendedName>
        <fullName evidence="1">Nucleotide-binding protein MRA_1430</fullName>
    </recommendedName>
</protein>